<dbReference type="EC" id="2.7.11.22" evidence="2"/>
<dbReference type="EMBL" id="AL590448">
    <property type="protein sequence ID" value="CAD26495.1"/>
    <property type="molecule type" value="Genomic_DNA"/>
</dbReference>
<dbReference type="RefSeq" id="NP_597319.1">
    <property type="nucleotide sequence ID" value="NM_001041928.1"/>
</dbReference>
<dbReference type="SMR" id="Q8SR86"/>
<dbReference type="FunCoup" id="Q8SR86">
    <property type="interactions" value="292"/>
</dbReference>
<dbReference type="STRING" id="284813.Q8SR86"/>
<dbReference type="GeneID" id="859741"/>
<dbReference type="KEGG" id="ecu:ECU08_1920"/>
<dbReference type="VEuPathDB" id="MicrosporidiaDB:ECU08_1920"/>
<dbReference type="HOGENOM" id="CLU_000288_181_1_1"/>
<dbReference type="InParanoid" id="Q8SR86"/>
<dbReference type="OMA" id="YLYQITR"/>
<dbReference type="OrthoDB" id="1732493at2759"/>
<dbReference type="Proteomes" id="UP000000819">
    <property type="component" value="Chromosome VIII"/>
</dbReference>
<dbReference type="GO" id="GO:0000307">
    <property type="term" value="C:cyclin-dependent protein kinase holoenzyme complex"/>
    <property type="evidence" value="ECO:0007669"/>
    <property type="project" value="TreeGrafter"/>
</dbReference>
<dbReference type="GO" id="GO:0005737">
    <property type="term" value="C:cytoplasm"/>
    <property type="evidence" value="ECO:0007669"/>
    <property type="project" value="TreeGrafter"/>
</dbReference>
<dbReference type="GO" id="GO:0005634">
    <property type="term" value="C:nucleus"/>
    <property type="evidence" value="ECO:0007669"/>
    <property type="project" value="UniProtKB-SubCell"/>
</dbReference>
<dbReference type="GO" id="GO:0005524">
    <property type="term" value="F:ATP binding"/>
    <property type="evidence" value="ECO:0007669"/>
    <property type="project" value="UniProtKB-KW"/>
</dbReference>
<dbReference type="GO" id="GO:0030332">
    <property type="term" value="F:cyclin binding"/>
    <property type="evidence" value="ECO:0007669"/>
    <property type="project" value="TreeGrafter"/>
</dbReference>
<dbReference type="GO" id="GO:0004693">
    <property type="term" value="F:cyclin-dependent protein serine/threonine kinase activity"/>
    <property type="evidence" value="ECO:0007669"/>
    <property type="project" value="UniProtKB-EC"/>
</dbReference>
<dbReference type="GO" id="GO:0106310">
    <property type="term" value="F:protein serine kinase activity"/>
    <property type="evidence" value="ECO:0007669"/>
    <property type="project" value="RHEA"/>
</dbReference>
<dbReference type="GO" id="GO:0051301">
    <property type="term" value="P:cell division"/>
    <property type="evidence" value="ECO:0007669"/>
    <property type="project" value="UniProtKB-KW"/>
</dbReference>
<dbReference type="GO" id="GO:0000082">
    <property type="term" value="P:G1/S transition of mitotic cell cycle"/>
    <property type="evidence" value="ECO:0007669"/>
    <property type="project" value="TreeGrafter"/>
</dbReference>
<dbReference type="GO" id="GO:0010389">
    <property type="term" value="P:regulation of G2/M transition of mitotic cell cycle"/>
    <property type="evidence" value="ECO:0007669"/>
    <property type="project" value="TreeGrafter"/>
</dbReference>
<dbReference type="GO" id="GO:0010468">
    <property type="term" value="P:regulation of gene expression"/>
    <property type="evidence" value="ECO:0007669"/>
    <property type="project" value="TreeGrafter"/>
</dbReference>
<dbReference type="GO" id="GO:0007165">
    <property type="term" value="P:signal transduction"/>
    <property type="evidence" value="ECO:0007669"/>
    <property type="project" value="TreeGrafter"/>
</dbReference>
<dbReference type="CDD" id="cd07829">
    <property type="entry name" value="STKc_CDK_like"/>
    <property type="match status" value="1"/>
</dbReference>
<dbReference type="FunFam" id="1.10.510.10:FF:000574">
    <property type="entry name" value="Cell division related protein kinase 2"/>
    <property type="match status" value="1"/>
</dbReference>
<dbReference type="FunFam" id="3.30.200.20:FF:000375">
    <property type="entry name" value="Cell division related protein kinase 2"/>
    <property type="match status" value="1"/>
</dbReference>
<dbReference type="Gene3D" id="3.30.200.20">
    <property type="entry name" value="Phosphorylase Kinase, domain 1"/>
    <property type="match status" value="1"/>
</dbReference>
<dbReference type="Gene3D" id="1.10.510.10">
    <property type="entry name" value="Transferase(Phosphotransferase) domain 1"/>
    <property type="match status" value="1"/>
</dbReference>
<dbReference type="InterPro" id="IPR050108">
    <property type="entry name" value="CDK"/>
</dbReference>
<dbReference type="InterPro" id="IPR011009">
    <property type="entry name" value="Kinase-like_dom_sf"/>
</dbReference>
<dbReference type="InterPro" id="IPR000719">
    <property type="entry name" value="Prot_kinase_dom"/>
</dbReference>
<dbReference type="InterPro" id="IPR017441">
    <property type="entry name" value="Protein_kinase_ATP_BS"/>
</dbReference>
<dbReference type="InterPro" id="IPR008271">
    <property type="entry name" value="Ser/Thr_kinase_AS"/>
</dbReference>
<dbReference type="PANTHER" id="PTHR24056">
    <property type="entry name" value="CELL DIVISION PROTEIN KINASE"/>
    <property type="match status" value="1"/>
</dbReference>
<dbReference type="PANTHER" id="PTHR24056:SF254">
    <property type="entry name" value="CYCLIN-DEPENDENT KINASE 2"/>
    <property type="match status" value="1"/>
</dbReference>
<dbReference type="Pfam" id="PF00069">
    <property type="entry name" value="Pkinase"/>
    <property type="match status" value="1"/>
</dbReference>
<dbReference type="SMART" id="SM00220">
    <property type="entry name" value="S_TKc"/>
    <property type="match status" value="1"/>
</dbReference>
<dbReference type="SUPFAM" id="SSF56112">
    <property type="entry name" value="Protein kinase-like (PK-like)"/>
    <property type="match status" value="1"/>
</dbReference>
<dbReference type="PROSITE" id="PS00107">
    <property type="entry name" value="PROTEIN_KINASE_ATP"/>
    <property type="match status" value="1"/>
</dbReference>
<dbReference type="PROSITE" id="PS50011">
    <property type="entry name" value="PROTEIN_KINASE_DOM"/>
    <property type="match status" value="1"/>
</dbReference>
<dbReference type="PROSITE" id="PS00108">
    <property type="entry name" value="PROTEIN_KINASE_ST"/>
    <property type="match status" value="1"/>
</dbReference>
<protein>
    <recommendedName>
        <fullName evidence="1">Cyclin-dependent kinase 1</fullName>
        <shortName evidence="1">CDK1</shortName>
    </recommendedName>
    <alternativeName>
        <fullName>Cell division control protein 28 homolog</fullName>
        <ecNumber evidence="2">2.7.11.22</ecNumber>
    </alternativeName>
    <alternativeName>
        <fullName>Cell division protein kinase 1</fullName>
    </alternativeName>
</protein>
<keyword id="KW-0067">ATP-binding</keyword>
<keyword id="KW-0131">Cell cycle</keyword>
<keyword id="KW-0132">Cell division</keyword>
<keyword id="KW-0418">Kinase</keyword>
<keyword id="KW-0498">Mitosis</keyword>
<keyword id="KW-0547">Nucleotide-binding</keyword>
<keyword id="KW-0539">Nucleus</keyword>
<keyword id="KW-1185">Reference proteome</keyword>
<keyword id="KW-0723">Serine/threonine-protein kinase</keyword>
<keyword id="KW-0808">Transferase</keyword>
<name>CDK1_ENCCU</name>
<organism>
    <name type="scientific">Encephalitozoon cuniculi (strain GB-M1)</name>
    <name type="common">Microsporidian parasite</name>
    <dbReference type="NCBI Taxonomy" id="284813"/>
    <lineage>
        <taxon>Eukaryota</taxon>
        <taxon>Fungi</taxon>
        <taxon>Fungi incertae sedis</taxon>
        <taxon>Microsporidia</taxon>
        <taxon>Unikaryonidae</taxon>
        <taxon>Encephalitozoon</taxon>
    </lineage>
</organism>
<accession>Q8SR86</accession>
<sequence>MTESFQKLEKIGEGTYGVVYKARERNTNRVVALKKIRLENENEGIPATTIREILLLKNLKHSTIVELSDVIYNNNKMYLVFEYVELDLRRYLDRMSDEGRLVEEGFVRKMSQQLLTAMEYCHSRNIFHRDLKPQNILVDPKENIKLADFGLGRAAGIPLRTYTTEVVTLWYRPPELLLGCKYYDASVDVWSAACIMAEVVLMRPFFPGDSEIDQLFRIFKVLGTPNNSRWSNVENFPNYKVEFPVWDPVDLKTIFRGDPDFVDLISKMLEYDPKMRMTAKNGLSHKYFEGMPLIME</sequence>
<reference key="1">
    <citation type="journal article" date="2001" name="Nature">
        <title>Genome sequence and gene compaction of the eukaryote parasite Encephalitozoon cuniculi.</title>
        <authorList>
            <person name="Katinka M.D."/>
            <person name="Duprat S."/>
            <person name="Cornillot E."/>
            <person name="Metenier G."/>
            <person name="Thomarat F."/>
            <person name="Prensier G."/>
            <person name="Barbe V."/>
            <person name="Peyretaillade E."/>
            <person name="Brottier P."/>
            <person name="Wincker P."/>
            <person name="Delbac F."/>
            <person name="El Alaoui H."/>
            <person name="Peyret P."/>
            <person name="Saurin W."/>
            <person name="Gouy M."/>
            <person name="Weissenbach J."/>
            <person name="Vivares C.P."/>
        </authorList>
    </citation>
    <scope>NUCLEOTIDE SEQUENCE [LARGE SCALE GENOMIC DNA]</scope>
    <source>
        <strain>GB-M1</strain>
    </source>
</reference>
<reference key="2">
    <citation type="journal article" date="2007" name="BMC Genomics">
        <title>The complement of protein kinases of the microsporidium Encephalitozoon cuniculi in relation to those of Saccharomyces cerevisiae and Schizosaccharomyces pombe.</title>
        <authorList>
            <person name="Miranda-Saavedra D."/>
            <person name="Stark M.J.R."/>
            <person name="Packer J.C."/>
            <person name="Vivares C.P."/>
            <person name="Doerig C."/>
            <person name="Barton G.J."/>
        </authorList>
    </citation>
    <scope>PREDICTION OF FUNCTION</scope>
</reference>
<evidence type="ECO:0000250" key="1">
    <source>
        <dbReference type="UniProtKB" id="P00546"/>
    </source>
</evidence>
<evidence type="ECO:0000250" key="2">
    <source>
        <dbReference type="UniProtKB" id="P04551"/>
    </source>
</evidence>
<evidence type="ECO:0000250" key="3">
    <source>
        <dbReference type="UniProtKB" id="P24941"/>
    </source>
</evidence>
<evidence type="ECO:0000255" key="4">
    <source>
        <dbReference type="PROSITE-ProRule" id="PRU00159"/>
    </source>
</evidence>
<evidence type="ECO:0000255" key="5">
    <source>
        <dbReference type="PROSITE-ProRule" id="PRU10027"/>
    </source>
</evidence>
<evidence type="ECO:0000305" key="6"/>
<feature type="chain" id="PRO_0000385503" description="Cyclin-dependent kinase 1">
    <location>
        <begin position="1"/>
        <end position="296"/>
    </location>
</feature>
<feature type="domain" description="Protein kinase" evidence="4">
    <location>
        <begin position="5"/>
        <end position="288"/>
    </location>
</feature>
<feature type="active site" description="Proton acceptor" evidence="4 5">
    <location>
        <position position="130"/>
    </location>
</feature>
<feature type="binding site" evidence="4">
    <location>
        <begin position="11"/>
        <end position="19"/>
    </location>
    <ligand>
        <name>ATP</name>
        <dbReference type="ChEBI" id="CHEBI:30616"/>
    </ligand>
</feature>
<feature type="binding site" evidence="4">
    <location>
        <position position="34"/>
    </location>
    <ligand>
        <name>ATP</name>
        <dbReference type="ChEBI" id="CHEBI:30616"/>
    </ligand>
</feature>
<proteinExistence type="inferred from homology"/>
<gene>
    <name evidence="1" type="primary">CDC28</name>
    <name type="synonym">CDK1</name>
    <name type="ordered locus">ECU08_1920</name>
</gene>
<comment type="function">
    <text evidence="2">Cyclin-dependent kinase that acts as a master regulator of the mitotic and meiotic cell cycles.</text>
</comment>
<comment type="catalytic activity">
    <reaction evidence="3">
        <text>L-seryl-[protein] + ATP = O-phospho-L-seryl-[protein] + ADP + H(+)</text>
        <dbReference type="Rhea" id="RHEA:17989"/>
        <dbReference type="Rhea" id="RHEA-COMP:9863"/>
        <dbReference type="Rhea" id="RHEA-COMP:11604"/>
        <dbReference type="ChEBI" id="CHEBI:15378"/>
        <dbReference type="ChEBI" id="CHEBI:29999"/>
        <dbReference type="ChEBI" id="CHEBI:30616"/>
        <dbReference type="ChEBI" id="CHEBI:83421"/>
        <dbReference type="ChEBI" id="CHEBI:456216"/>
        <dbReference type="EC" id="2.7.11.22"/>
    </reaction>
</comment>
<comment type="catalytic activity">
    <reaction evidence="2">
        <text>L-threonyl-[protein] + ATP = O-phospho-L-threonyl-[protein] + ADP + H(+)</text>
        <dbReference type="Rhea" id="RHEA:46608"/>
        <dbReference type="Rhea" id="RHEA-COMP:11060"/>
        <dbReference type="Rhea" id="RHEA-COMP:11605"/>
        <dbReference type="ChEBI" id="CHEBI:15378"/>
        <dbReference type="ChEBI" id="CHEBI:30013"/>
        <dbReference type="ChEBI" id="CHEBI:30616"/>
        <dbReference type="ChEBI" id="CHEBI:61977"/>
        <dbReference type="ChEBI" id="CHEBI:456216"/>
        <dbReference type="EC" id="2.7.11.22"/>
    </reaction>
</comment>
<comment type="subcellular location">
    <subcellularLocation>
        <location evidence="2">Nucleus</location>
    </subcellularLocation>
</comment>
<comment type="similarity">
    <text evidence="6">Belongs to the protein kinase superfamily. CMGC Ser/Thr protein kinase family. CDC2/CDKX subfamily.</text>
</comment>